<comment type="catalytic activity">
    <reaction evidence="1">
        <text>L-methionyl-[protein] + [thioredoxin]-disulfide + H2O = L-methionyl-(R)-S-oxide-[protein] + [thioredoxin]-dithiol</text>
        <dbReference type="Rhea" id="RHEA:24164"/>
        <dbReference type="Rhea" id="RHEA-COMP:10698"/>
        <dbReference type="Rhea" id="RHEA-COMP:10700"/>
        <dbReference type="Rhea" id="RHEA-COMP:12313"/>
        <dbReference type="Rhea" id="RHEA-COMP:12314"/>
        <dbReference type="ChEBI" id="CHEBI:15377"/>
        <dbReference type="ChEBI" id="CHEBI:16044"/>
        <dbReference type="ChEBI" id="CHEBI:29950"/>
        <dbReference type="ChEBI" id="CHEBI:45764"/>
        <dbReference type="ChEBI" id="CHEBI:50058"/>
        <dbReference type="EC" id="1.8.4.12"/>
    </reaction>
</comment>
<comment type="cofactor">
    <cofactor evidence="1">
        <name>Zn(2+)</name>
        <dbReference type="ChEBI" id="CHEBI:29105"/>
    </cofactor>
    <text evidence="1">Binds 1 zinc ion per subunit. The zinc ion is important for the structural integrity of the protein.</text>
</comment>
<comment type="similarity">
    <text evidence="1">Belongs to the MsrB Met sulfoxide reductase family.</text>
</comment>
<name>MSRB_METPP</name>
<feature type="chain" id="PRO_1000087338" description="Peptide methionine sulfoxide reductase MsrB">
    <location>
        <begin position="1"/>
        <end position="138"/>
    </location>
</feature>
<feature type="domain" description="MsrB" evidence="2">
    <location>
        <begin position="15"/>
        <end position="137"/>
    </location>
</feature>
<feature type="active site" description="Nucleophile" evidence="2">
    <location>
        <position position="126"/>
    </location>
</feature>
<feature type="binding site" evidence="2">
    <location>
        <position position="54"/>
    </location>
    <ligand>
        <name>Zn(2+)</name>
        <dbReference type="ChEBI" id="CHEBI:29105"/>
    </ligand>
</feature>
<feature type="binding site" evidence="2">
    <location>
        <position position="57"/>
    </location>
    <ligand>
        <name>Zn(2+)</name>
        <dbReference type="ChEBI" id="CHEBI:29105"/>
    </ligand>
</feature>
<feature type="binding site" evidence="2">
    <location>
        <position position="103"/>
    </location>
    <ligand>
        <name>Zn(2+)</name>
        <dbReference type="ChEBI" id="CHEBI:29105"/>
    </ligand>
</feature>
<feature type="binding site" evidence="2">
    <location>
        <position position="106"/>
    </location>
    <ligand>
        <name>Zn(2+)</name>
        <dbReference type="ChEBI" id="CHEBI:29105"/>
    </ligand>
</feature>
<dbReference type="EC" id="1.8.4.12" evidence="1"/>
<dbReference type="EMBL" id="CP000555">
    <property type="protein sequence ID" value="ABM94726.1"/>
    <property type="molecule type" value="Genomic_DNA"/>
</dbReference>
<dbReference type="RefSeq" id="WP_011829363.1">
    <property type="nucleotide sequence ID" value="NC_008825.1"/>
</dbReference>
<dbReference type="SMR" id="A2SGN7"/>
<dbReference type="STRING" id="420662.Mpe_A1767"/>
<dbReference type="KEGG" id="mpt:Mpe_A1767"/>
<dbReference type="eggNOG" id="COG0229">
    <property type="taxonomic scope" value="Bacteria"/>
</dbReference>
<dbReference type="HOGENOM" id="CLU_031040_8_5_4"/>
<dbReference type="Proteomes" id="UP000000366">
    <property type="component" value="Chromosome"/>
</dbReference>
<dbReference type="GO" id="GO:0005737">
    <property type="term" value="C:cytoplasm"/>
    <property type="evidence" value="ECO:0007669"/>
    <property type="project" value="TreeGrafter"/>
</dbReference>
<dbReference type="GO" id="GO:0033743">
    <property type="term" value="F:peptide-methionine (R)-S-oxide reductase activity"/>
    <property type="evidence" value="ECO:0007669"/>
    <property type="project" value="UniProtKB-UniRule"/>
</dbReference>
<dbReference type="GO" id="GO:0008270">
    <property type="term" value="F:zinc ion binding"/>
    <property type="evidence" value="ECO:0007669"/>
    <property type="project" value="UniProtKB-UniRule"/>
</dbReference>
<dbReference type="GO" id="GO:0030091">
    <property type="term" value="P:protein repair"/>
    <property type="evidence" value="ECO:0007669"/>
    <property type="project" value="InterPro"/>
</dbReference>
<dbReference type="GO" id="GO:0006979">
    <property type="term" value="P:response to oxidative stress"/>
    <property type="evidence" value="ECO:0007669"/>
    <property type="project" value="InterPro"/>
</dbReference>
<dbReference type="FunFam" id="2.170.150.20:FF:000001">
    <property type="entry name" value="Peptide methionine sulfoxide reductase MsrB"/>
    <property type="match status" value="1"/>
</dbReference>
<dbReference type="Gene3D" id="2.170.150.20">
    <property type="entry name" value="Peptide methionine sulfoxide reductase"/>
    <property type="match status" value="1"/>
</dbReference>
<dbReference type="HAMAP" id="MF_01400">
    <property type="entry name" value="MsrB"/>
    <property type="match status" value="1"/>
</dbReference>
<dbReference type="InterPro" id="IPR028427">
    <property type="entry name" value="Met_Sox_Rdtase_MsrB"/>
</dbReference>
<dbReference type="InterPro" id="IPR002579">
    <property type="entry name" value="Met_Sox_Rdtase_MsrB_dom"/>
</dbReference>
<dbReference type="InterPro" id="IPR011057">
    <property type="entry name" value="Mss4-like_sf"/>
</dbReference>
<dbReference type="NCBIfam" id="TIGR00357">
    <property type="entry name" value="peptide-methionine (R)-S-oxide reductase MsrB"/>
    <property type="match status" value="1"/>
</dbReference>
<dbReference type="PANTHER" id="PTHR10173">
    <property type="entry name" value="METHIONINE SULFOXIDE REDUCTASE"/>
    <property type="match status" value="1"/>
</dbReference>
<dbReference type="PANTHER" id="PTHR10173:SF52">
    <property type="entry name" value="METHIONINE-R-SULFOXIDE REDUCTASE B1"/>
    <property type="match status" value="1"/>
</dbReference>
<dbReference type="Pfam" id="PF01641">
    <property type="entry name" value="SelR"/>
    <property type="match status" value="1"/>
</dbReference>
<dbReference type="SUPFAM" id="SSF51316">
    <property type="entry name" value="Mss4-like"/>
    <property type="match status" value="1"/>
</dbReference>
<dbReference type="PROSITE" id="PS51790">
    <property type="entry name" value="MSRB"/>
    <property type="match status" value="1"/>
</dbReference>
<gene>
    <name evidence="1" type="primary">msrB</name>
    <name type="ordered locus">Mpe_A1767</name>
</gene>
<keyword id="KW-0479">Metal-binding</keyword>
<keyword id="KW-0560">Oxidoreductase</keyword>
<keyword id="KW-1185">Reference proteome</keyword>
<keyword id="KW-0862">Zinc</keyword>
<proteinExistence type="inferred from homology"/>
<organism>
    <name type="scientific">Methylibium petroleiphilum (strain ATCC BAA-1232 / LMG 22953 / PM1)</name>
    <dbReference type="NCBI Taxonomy" id="420662"/>
    <lineage>
        <taxon>Bacteria</taxon>
        <taxon>Pseudomonadati</taxon>
        <taxon>Pseudomonadota</taxon>
        <taxon>Betaproteobacteria</taxon>
        <taxon>Burkholderiales</taxon>
        <taxon>Sphaerotilaceae</taxon>
        <taxon>Methylibium</taxon>
    </lineage>
</organism>
<accession>A2SGN7</accession>
<evidence type="ECO:0000255" key="1">
    <source>
        <dbReference type="HAMAP-Rule" id="MF_01400"/>
    </source>
</evidence>
<evidence type="ECO:0000255" key="2">
    <source>
        <dbReference type="PROSITE-ProRule" id="PRU01126"/>
    </source>
</evidence>
<protein>
    <recommendedName>
        <fullName evidence="1">Peptide methionine sulfoxide reductase MsrB</fullName>
        <ecNumber evidence="1">1.8.4.12</ecNumber>
    </recommendedName>
    <alternativeName>
        <fullName evidence="1">Peptide-methionine (R)-S-oxide reductase</fullName>
    </alternativeName>
</protein>
<sequence length="138" mass="15547">MSSTDDKPRKVQKTEAEWRAQLDPMQFEVTRHGATERAFTGKYADHWQEGVYHCVGCNAPLFDSGTKFDAGCGWPSYFQPLRGEIIDRVVDRSHGMVRVEVRCQDCGAHLGHVFPDGPEPTGERYCINSASLGFEPRK</sequence>
<reference key="1">
    <citation type="journal article" date="2007" name="J. Bacteriol.">
        <title>Whole-genome analysis of the methyl tert-butyl ether-degrading beta-proteobacterium Methylibium petroleiphilum PM1.</title>
        <authorList>
            <person name="Kane S.R."/>
            <person name="Chakicherla A.Y."/>
            <person name="Chain P.S.G."/>
            <person name="Schmidt R."/>
            <person name="Shin M.W."/>
            <person name="Legler T.C."/>
            <person name="Scow K.M."/>
            <person name="Larimer F.W."/>
            <person name="Lucas S.M."/>
            <person name="Richardson P.M."/>
            <person name="Hristova K.R."/>
        </authorList>
    </citation>
    <scope>NUCLEOTIDE SEQUENCE [LARGE SCALE GENOMIC DNA]</scope>
    <source>
        <strain>ATCC BAA-1232 / LMG 22953 / PM1</strain>
    </source>
</reference>